<keyword id="KW-0106">Calcium</keyword>
<keyword id="KW-0107">Calcium channel</keyword>
<keyword id="KW-0109">Calcium transport</keyword>
<keyword id="KW-1015">Disulfide bond</keyword>
<keyword id="KW-0325">Glycoprotein</keyword>
<keyword id="KW-0407">Ion channel</keyword>
<keyword id="KW-0406">Ion transport</keyword>
<keyword id="KW-0472">Membrane</keyword>
<keyword id="KW-0479">Metal-binding</keyword>
<keyword id="KW-0597">Phosphoprotein</keyword>
<keyword id="KW-1185">Reference proteome</keyword>
<keyword id="KW-0677">Repeat</keyword>
<keyword id="KW-0812">Transmembrane</keyword>
<keyword id="KW-1133">Transmembrane helix</keyword>
<keyword id="KW-0813">Transport</keyword>
<keyword id="KW-0851">Voltage-gated channel</keyword>
<protein>
    <recommendedName>
        <fullName>Dihydropyridine-sensitive L-type skeletal muscle calcium channel subunit alpha-1</fullName>
    </recommendedName>
</protein>
<comment type="function">
    <text evidence="2 3">Voltage-sensitive calcium channels (VSCC) mediate the entry of calcium ions into excitable cells and are also involved in a variety of calcium-dependent processes, including muscle contraction, gene expression, cell motility, cell division and cell death. The isoform alpha-1S gives rise to L-type calcium currents. Long-lasting (L-type) calcium channels belong to the 'high-voltage activated' (HVA) group. They are blocked by dihydropyridines (DHP), phenylalkylamines, and by benzothiazepines. Calcium channels containing the alpha-1S subunit play an important role in excitation-contraction coupling in skeletal muscle (By similarity).</text>
</comment>
<comment type="subunit">
    <text evidence="1">Multisubunit complex consisting of alpha-1, alpha-2, beta and delta subunits in a 1:1:1:1 ratio. The channel activity is directed by the pore-forming and voltage-sensitive alpha-1 subunit. In many cases, this subunit is sufficient to generate voltage-sensitive calcium channel activity. The auxiliary subunits beta and alpha-2/delta linked by a disulfide bridge regulate the channel activity. An additional gamma subunit is present only in skeletal muscle L-type channel (By similarity).</text>
</comment>
<comment type="subcellular location">
    <subcellularLocation>
        <location>Membrane</location>
        <topology>Multi-pass membrane protein</topology>
    </subcellularLocation>
</comment>
<comment type="tissue specificity">
    <text>Skeletal muscle.</text>
</comment>
<comment type="PTM">
    <text>May be non-phosphorylated.</text>
</comment>
<comment type="similarity">
    <text evidence="7">Belongs to the calcium channel alpha-1 subunit (TC 1.A.1.11) family.</text>
</comment>
<dbReference type="EMBL" id="M62554">
    <property type="protein sequence ID" value="AAA49205.1"/>
    <property type="molecule type" value="mRNA"/>
</dbReference>
<dbReference type="PIR" id="A37860">
    <property type="entry name" value="A37860"/>
</dbReference>
<dbReference type="SMR" id="P22316"/>
<dbReference type="Proteomes" id="UP000694384">
    <property type="component" value="Unplaced"/>
</dbReference>
<dbReference type="Proteomes" id="UP000694427">
    <property type="component" value="Unplaced"/>
</dbReference>
<dbReference type="Proteomes" id="UP000694700">
    <property type="component" value="Unplaced"/>
</dbReference>
<dbReference type="Proteomes" id="UP000694701">
    <property type="component" value="Unplaced"/>
</dbReference>
<dbReference type="Proteomes" id="UP001155660">
    <property type="component" value="Unplaced"/>
</dbReference>
<dbReference type="GO" id="GO:0030315">
    <property type="term" value="C:T-tubule"/>
    <property type="evidence" value="ECO:0000250"/>
    <property type="project" value="UniProtKB"/>
</dbReference>
<dbReference type="GO" id="GO:0005891">
    <property type="term" value="C:voltage-gated calcium channel complex"/>
    <property type="evidence" value="ECO:0007669"/>
    <property type="project" value="InterPro"/>
</dbReference>
<dbReference type="GO" id="GO:0005509">
    <property type="term" value="F:calcium ion binding"/>
    <property type="evidence" value="ECO:0007669"/>
    <property type="project" value="InterPro"/>
</dbReference>
<dbReference type="GO" id="GO:0008331">
    <property type="term" value="F:high voltage-gated calcium channel activity"/>
    <property type="evidence" value="ECO:0007669"/>
    <property type="project" value="TreeGrafter"/>
</dbReference>
<dbReference type="GO" id="GO:0005245">
    <property type="term" value="F:voltage-gated calcium channel activity"/>
    <property type="evidence" value="ECO:0000250"/>
    <property type="project" value="UniProtKB"/>
</dbReference>
<dbReference type="GO" id="GO:0098703">
    <property type="term" value="P:calcium ion import across plasma membrane"/>
    <property type="evidence" value="ECO:0007669"/>
    <property type="project" value="TreeGrafter"/>
</dbReference>
<dbReference type="GO" id="GO:0006936">
    <property type="term" value="P:muscle contraction"/>
    <property type="evidence" value="ECO:0000250"/>
    <property type="project" value="UniProtKB"/>
</dbReference>
<dbReference type="GO" id="GO:0051209">
    <property type="term" value="P:release of sequestered calcium ion into cytosol"/>
    <property type="evidence" value="ECO:0000250"/>
    <property type="project" value="UniProtKB"/>
</dbReference>
<dbReference type="FunFam" id="1.10.287.70:FF:000007">
    <property type="entry name" value="Voltage-dependent L-type calcium channel subunit alpha"/>
    <property type="match status" value="1"/>
</dbReference>
<dbReference type="FunFam" id="1.10.287.70:FF:000009">
    <property type="entry name" value="Voltage-dependent L-type calcium channel subunit alpha"/>
    <property type="match status" value="1"/>
</dbReference>
<dbReference type="FunFam" id="1.10.287.70:FF:000021">
    <property type="entry name" value="Voltage-dependent L-type calcium channel subunit alpha"/>
    <property type="match status" value="1"/>
</dbReference>
<dbReference type="FunFam" id="1.20.120.350:FF:000001">
    <property type="entry name" value="Voltage-dependent L-type calcium channel subunit alpha"/>
    <property type="match status" value="1"/>
</dbReference>
<dbReference type="FunFam" id="1.20.120.350:FF:000006">
    <property type="entry name" value="Voltage-dependent L-type calcium channel subunit alpha"/>
    <property type="match status" value="1"/>
</dbReference>
<dbReference type="FunFam" id="1.20.120.350:FF:000010">
    <property type="entry name" value="Voltage-dependent L-type calcium channel subunit alpha"/>
    <property type="match status" value="1"/>
</dbReference>
<dbReference type="FunFam" id="1.20.120.350:FF:000040">
    <property type="entry name" value="Voltage-dependent L-type calcium channel subunit alpha"/>
    <property type="match status" value="1"/>
</dbReference>
<dbReference type="FunFam" id="1.10.238.10:FF:000063">
    <property type="entry name" value="Voltage-dependent N-type calcium channel subunit alpha"/>
    <property type="match status" value="1"/>
</dbReference>
<dbReference type="Gene3D" id="1.10.287.70">
    <property type="match status" value="4"/>
</dbReference>
<dbReference type="Gene3D" id="6.10.250.2180">
    <property type="match status" value="1"/>
</dbReference>
<dbReference type="Gene3D" id="6.10.250.2500">
    <property type="match status" value="1"/>
</dbReference>
<dbReference type="Gene3D" id="1.20.120.350">
    <property type="entry name" value="Voltage-gated potassium channels. Chain C"/>
    <property type="match status" value="4"/>
</dbReference>
<dbReference type="InterPro" id="IPR031688">
    <property type="entry name" value="CAC1F_C"/>
</dbReference>
<dbReference type="InterPro" id="IPR002048">
    <property type="entry name" value="EF_hand_dom"/>
</dbReference>
<dbReference type="InterPro" id="IPR031649">
    <property type="entry name" value="GPHH_dom"/>
</dbReference>
<dbReference type="InterPro" id="IPR005821">
    <property type="entry name" value="Ion_trans_dom"/>
</dbReference>
<dbReference type="InterPro" id="IPR014873">
    <property type="entry name" value="VDCC_a1su_IQ"/>
</dbReference>
<dbReference type="InterPro" id="IPR050599">
    <property type="entry name" value="VDCC_alpha-1_subunit"/>
</dbReference>
<dbReference type="InterPro" id="IPR005450">
    <property type="entry name" value="VDCC_L_a1ssu"/>
</dbReference>
<dbReference type="InterPro" id="IPR005446">
    <property type="entry name" value="VDCC_L_a1su"/>
</dbReference>
<dbReference type="InterPro" id="IPR002077">
    <property type="entry name" value="VDCCAlpha1"/>
</dbReference>
<dbReference type="InterPro" id="IPR027359">
    <property type="entry name" value="Volt_channel_dom_sf"/>
</dbReference>
<dbReference type="PANTHER" id="PTHR45628">
    <property type="entry name" value="VOLTAGE-DEPENDENT CALCIUM CHANNEL TYPE A SUBUNIT ALPHA-1"/>
    <property type="match status" value="1"/>
</dbReference>
<dbReference type="PANTHER" id="PTHR45628:SF9">
    <property type="entry name" value="VOLTAGE-DEPENDENT L-TYPE CALCIUM CHANNEL SUBUNIT ALPHA-1S"/>
    <property type="match status" value="1"/>
</dbReference>
<dbReference type="Pfam" id="PF08763">
    <property type="entry name" value="Ca_chan_IQ"/>
    <property type="match status" value="1"/>
</dbReference>
<dbReference type="Pfam" id="PF16885">
    <property type="entry name" value="CAC1F_C"/>
    <property type="match status" value="1"/>
</dbReference>
<dbReference type="Pfam" id="PF16905">
    <property type="entry name" value="GPHH"/>
    <property type="match status" value="1"/>
</dbReference>
<dbReference type="Pfam" id="PF00520">
    <property type="entry name" value="Ion_trans"/>
    <property type="match status" value="4"/>
</dbReference>
<dbReference type="PRINTS" id="PR00167">
    <property type="entry name" value="CACHANNEL"/>
</dbReference>
<dbReference type="PRINTS" id="PR01630">
    <property type="entry name" value="LVDCCALPHA1"/>
</dbReference>
<dbReference type="PRINTS" id="PR01634">
    <property type="entry name" value="LVDCCALPHA1S"/>
</dbReference>
<dbReference type="SMART" id="SM01062">
    <property type="entry name" value="Ca_chan_IQ"/>
    <property type="match status" value="1"/>
</dbReference>
<dbReference type="SUPFAM" id="SSF81324">
    <property type="entry name" value="Voltage-gated potassium channels"/>
    <property type="match status" value="4"/>
</dbReference>
<dbReference type="PROSITE" id="PS50222">
    <property type="entry name" value="EF_HAND_2"/>
    <property type="match status" value="1"/>
</dbReference>
<evidence type="ECO:0000250" key="1"/>
<evidence type="ECO:0000250" key="2">
    <source>
        <dbReference type="UniProtKB" id="P07293"/>
    </source>
</evidence>
<evidence type="ECO:0000250" key="3">
    <source>
        <dbReference type="UniProtKB" id="Q13698"/>
    </source>
</evidence>
<evidence type="ECO:0000255" key="4"/>
<evidence type="ECO:0000255" key="5">
    <source>
        <dbReference type="PROSITE-ProRule" id="PRU00448"/>
    </source>
</evidence>
<evidence type="ECO:0000256" key="6">
    <source>
        <dbReference type="SAM" id="MobiDB-lite"/>
    </source>
</evidence>
<evidence type="ECO:0000305" key="7"/>
<reference key="1">
    <citation type="journal article" date="1991" name="Proc. Natl. Acad. Sci. U.S.A.">
        <title>Calcium channels from Cyprinus carpio skeletal muscle.</title>
        <authorList>
            <person name="Grabner M."/>
            <person name="Friedrich K."/>
            <person name="Knaus H.-G."/>
            <person name="Striessnig J."/>
            <person name="Scheffauer F."/>
            <person name="Staudinger R."/>
            <person name="Koch W.J."/>
            <person name="Schwartz A."/>
            <person name="Glossmann H."/>
        </authorList>
    </citation>
    <scope>NUCLEOTIDE SEQUENCE [MRNA]</scope>
    <source>
        <tissue>Skeletal muscle</tissue>
    </source>
</reference>
<accession>P22316</accession>
<feature type="chain" id="PRO_0000053948" description="Dihydropyridine-sensitive L-type skeletal muscle calcium channel subunit alpha-1">
    <location>
        <begin position="1"/>
        <end position="1852"/>
    </location>
</feature>
<feature type="topological domain" description="Cytoplasmic" evidence="4">
    <location>
        <begin position="1"/>
        <end position="70"/>
    </location>
</feature>
<feature type="transmembrane region" description="Helical; Name=S1 of repeat I">
    <location>
        <begin position="71"/>
        <end position="86"/>
    </location>
</feature>
<feature type="topological domain" description="Extracellular" evidence="4">
    <location>
        <begin position="87"/>
        <end position="107"/>
    </location>
</feature>
<feature type="transmembrane region" description="Helical; Name=S2 of repeat I">
    <location>
        <begin position="108"/>
        <end position="127"/>
    </location>
</feature>
<feature type="topological domain" description="Cytoplasmic" evidence="4">
    <location>
        <begin position="128"/>
        <end position="139"/>
    </location>
</feature>
<feature type="transmembrane region" description="Helical; Name=S3 of repeat I">
    <location>
        <begin position="140"/>
        <end position="155"/>
    </location>
</feature>
<feature type="topological domain" description="Extracellular" evidence="4">
    <location>
        <begin position="156"/>
        <end position="176"/>
    </location>
</feature>
<feature type="transmembrane region" description="Helical; Name=S4 of repeat I">
    <location>
        <begin position="177"/>
        <end position="195"/>
    </location>
</feature>
<feature type="topological domain" description="Cytoplasmic" evidence="4">
    <location>
        <begin position="196"/>
        <end position="214"/>
    </location>
</feature>
<feature type="transmembrane region" description="Helical; Name=S5 of repeat I">
    <location>
        <begin position="215"/>
        <end position="234"/>
    </location>
</feature>
<feature type="topological domain" description="Extracellular" evidence="4">
    <location>
        <begin position="235"/>
        <end position="326"/>
    </location>
</feature>
<feature type="transmembrane region" description="Helical; Name=S6 of repeat I">
    <location>
        <begin position="327"/>
        <end position="351"/>
    </location>
</feature>
<feature type="topological domain" description="Cytoplasmic" evidence="4">
    <location>
        <begin position="352"/>
        <end position="447"/>
    </location>
</feature>
<feature type="transmembrane region" description="Helical; Name=S1 of repeat II">
    <location>
        <begin position="448"/>
        <end position="466"/>
    </location>
</feature>
<feature type="topological domain" description="Extracellular" evidence="4">
    <location>
        <begin position="467"/>
        <end position="481"/>
    </location>
</feature>
<feature type="transmembrane region" description="Helical; Name=S2 of repeat II">
    <location>
        <begin position="482"/>
        <end position="501"/>
    </location>
</feature>
<feature type="topological domain" description="Cytoplasmic" evidence="4">
    <location>
        <begin position="502"/>
        <end position="509"/>
    </location>
</feature>
<feature type="transmembrane region" description="Helical; Name=S3 of repeat II">
    <location>
        <begin position="510"/>
        <end position="528"/>
    </location>
</feature>
<feature type="topological domain" description="Extracellular" evidence="4">
    <location>
        <begin position="529"/>
        <end position="538"/>
    </location>
</feature>
<feature type="transmembrane region" description="Helical; Name=S4 of repeat II">
    <location>
        <begin position="539"/>
        <end position="557"/>
    </location>
</feature>
<feature type="topological domain" description="Cytoplasmic" evidence="4">
    <location>
        <begin position="558"/>
        <end position="576"/>
    </location>
</feature>
<feature type="transmembrane region" description="Helical; Name=S5 of repeat II">
    <location>
        <begin position="577"/>
        <end position="596"/>
    </location>
</feature>
<feature type="topological domain" description="Extracellular" evidence="4">
    <location>
        <begin position="597"/>
        <end position="651"/>
    </location>
</feature>
<feature type="transmembrane region" description="Helical; Name=S6 of repeat II">
    <location>
        <begin position="652"/>
        <end position="675"/>
    </location>
</feature>
<feature type="topological domain" description="Cytoplasmic" evidence="4">
    <location>
        <begin position="676"/>
        <end position="815"/>
    </location>
</feature>
<feature type="transmembrane region" description="Helical; Name=S1 of repeat III">
    <location>
        <begin position="816"/>
        <end position="834"/>
    </location>
</feature>
<feature type="topological domain" description="Extracellular" evidence="4">
    <location>
        <begin position="835"/>
        <end position="850"/>
    </location>
</feature>
<feature type="transmembrane region" description="Helical; Name=S2 of repeat III">
    <location>
        <begin position="851"/>
        <end position="870"/>
    </location>
</feature>
<feature type="topological domain" description="Cytoplasmic" evidence="4">
    <location>
        <begin position="871"/>
        <end position="882"/>
    </location>
</feature>
<feature type="transmembrane region" description="Helical; Name=S3 of repeat III">
    <location>
        <begin position="883"/>
        <end position="901"/>
    </location>
</feature>
<feature type="topological domain" description="Extracellular" evidence="4">
    <location>
        <begin position="902"/>
        <end position="908"/>
    </location>
</feature>
<feature type="transmembrane region" description="Helical; Name=S4 of repeat III">
    <location>
        <begin position="909"/>
        <end position="927"/>
    </location>
</feature>
<feature type="topological domain" description="Cytoplasmic" evidence="4">
    <location>
        <begin position="928"/>
        <end position="946"/>
    </location>
</feature>
<feature type="transmembrane region" description="Helical; Name=S5 of repeat III">
    <location>
        <begin position="947"/>
        <end position="966"/>
    </location>
</feature>
<feature type="topological domain" description="Extracellular" evidence="4">
    <location>
        <begin position="967"/>
        <end position="1056"/>
    </location>
</feature>
<feature type="transmembrane region" description="Helical; Name=S6 of repeat III">
    <location>
        <begin position="1057"/>
        <end position="1081"/>
    </location>
</feature>
<feature type="topological domain" description="Cytoplasmic" evidence="4">
    <location>
        <begin position="1082"/>
        <end position="1134"/>
    </location>
</feature>
<feature type="transmembrane region" description="Helical; Name=S1 of repeat IV">
    <location>
        <begin position="1135"/>
        <end position="1153"/>
    </location>
</feature>
<feature type="topological domain" description="Extracellular" evidence="4">
    <location>
        <begin position="1154"/>
        <end position="1168"/>
    </location>
</feature>
<feature type="transmembrane region" description="Helical; Name=S2 of repeat IV">
    <location>
        <begin position="1169"/>
        <end position="1188"/>
    </location>
</feature>
<feature type="topological domain" description="Cytoplasmic" evidence="4">
    <location>
        <begin position="1189"/>
        <end position="1196"/>
    </location>
</feature>
<feature type="transmembrane region" description="Helical; Name=S3 of repeat IV">
    <location>
        <begin position="1197"/>
        <end position="1215"/>
    </location>
</feature>
<feature type="topological domain" description="Extracellular" evidence="4">
    <location>
        <begin position="1216"/>
        <end position="1252"/>
    </location>
</feature>
<feature type="transmembrane region" description="Helical; Name=S4 of repeat IV">
    <location>
        <begin position="1253"/>
        <end position="1271"/>
    </location>
</feature>
<feature type="topological domain" description="Cytoplasmic" evidence="4">
    <location>
        <begin position="1272"/>
        <end position="1290"/>
    </location>
</feature>
<feature type="transmembrane region" description="Helical; Name=S5 of repeat IV">
    <location>
        <begin position="1291"/>
        <end position="1310"/>
    </location>
</feature>
<feature type="topological domain" description="Extracellular" evidence="4">
    <location>
        <begin position="1311"/>
        <end position="1377"/>
    </location>
</feature>
<feature type="transmembrane region" description="Helical; Name=S6 of repeat IV">
    <location>
        <begin position="1378"/>
        <end position="1402"/>
    </location>
</feature>
<feature type="topological domain" description="Cytoplasmic" evidence="4">
    <location>
        <begin position="1403"/>
        <end position="1852"/>
    </location>
</feature>
<feature type="repeat" description="I">
    <location>
        <begin position="57"/>
        <end position="354"/>
    </location>
</feature>
<feature type="repeat" description="II">
    <location>
        <begin position="433"/>
        <end position="679"/>
    </location>
</feature>
<feature type="repeat" description="III">
    <location>
        <begin position="802"/>
        <end position="1084"/>
    </location>
</feature>
<feature type="repeat" description="IV">
    <location>
        <begin position="1121"/>
        <end position="1405"/>
    </location>
</feature>
<feature type="domain" description="EF-hand" evidence="5">
    <location>
        <begin position="1418"/>
        <end position="1453"/>
    </location>
</feature>
<feature type="region of interest" description="Binding to the beta subunit" evidence="1">
    <location>
        <begin position="374"/>
        <end position="391"/>
    </location>
</feature>
<feature type="region of interest" description="Dihydropyridine binding" evidence="1">
    <location>
        <begin position="1004"/>
        <end position="1093"/>
    </location>
</feature>
<feature type="region of interest" description="Dihydropyridine binding" evidence="1">
    <location>
        <begin position="1358"/>
        <end position="1424"/>
    </location>
</feature>
<feature type="region of interest" description="Phenylalkylamine binding" evidence="1">
    <location>
        <begin position="1370"/>
        <end position="1413"/>
    </location>
</feature>
<feature type="region of interest" description="Disordered" evidence="6">
    <location>
        <begin position="1820"/>
        <end position="1852"/>
    </location>
</feature>
<feature type="binding site" evidence="7">
    <location>
        <position position="1431"/>
    </location>
    <ligand>
        <name>Ca(2+)</name>
        <dbReference type="ChEBI" id="CHEBI:29108"/>
    </ligand>
</feature>
<feature type="binding site" evidence="7">
    <location>
        <position position="1433"/>
    </location>
    <ligand>
        <name>Ca(2+)</name>
        <dbReference type="ChEBI" id="CHEBI:29108"/>
    </ligand>
</feature>
<feature type="binding site" evidence="7">
    <location>
        <position position="1435"/>
    </location>
    <ligand>
        <name>Ca(2+)</name>
        <dbReference type="ChEBI" id="CHEBI:29108"/>
    </ligand>
</feature>
<feature type="binding site" evidence="7">
    <location>
        <position position="1437"/>
    </location>
    <ligand>
        <name>Ca(2+)</name>
        <dbReference type="ChEBI" id="CHEBI:29108"/>
    </ligand>
</feature>
<feature type="binding site" evidence="7">
    <location>
        <position position="1442"/>
    </location>
    <ligand>
        <name>Ca(2+)</name>
        <dbReference type="ChEBI" id="CHEBI:29108"/>
    </ligand>
</feature>
<feature type="site" description="Calcium ion selectivity and permeability" evidence="1">
    <location>
        <position position="309"/>
    </location>
</feature>
<feature type="site" description="Calcium ion selectivity and permeability" evidence="1">
    <location>
        <position position="628"/>
    </location>
</feature>
<feature type="site" description="Calcium ion selectivity and permeability" evidence="1">
    <location>
        <position position="1030"/>
    </location>
</feature>
<feature type="site" description="Calcium ion selectivity and permeability" evidence="1">
    <location>
        <position position="1344"/>
    </location>
</feature>
<feature type="glycosylation site" description="N-linked (GlcNAc...) asparagine" evidence="4">
    <location>
        <position position="99"/>
    </location>
</feature>
<feature type="glycosylation site" description="N-linked (GlcNAc...) asparagine" evidence="4">
    <location>
        <position position="102"/>
    </location>
</feature>
<feature type="glycosylation site" description="N-linked (GlcNAc...) asparagine" evidence="4">
    <location>
        <position position="274"/>
    </location>
</feature>
<feature type="glycosylation site" description="N-linked (GlcNAc...) asparagine" evidence="4">
    <location>
        <position position="470"/>
    </location>
</feature>
<feature type="glycosylation site" description="N-linked (GlcNAc...) asparagine" evidence="4">
    <location>
        <position position="1157"/>
    </location>
</feature>
<name>CAC1S_CYPCA</name>
<sequence length="1852" mass="210098">MESGSGGGGGGGVAALASFIMNEEELKRKQREKLKKLQATGGNPRPPRSLFFFTLKNPFRKTCINIVEWKPFEIIILLTIFANCVALAVFLPMPEEDTNNTNLTLESLEYIFLVIFTLECFLKIVAYGLLFHEGAYLRNCWNILDFVIVFMGLFTLVVDTINTIAGVPTEKGGGFDMKALRAFRVLRPLRLVSGVPSLQVVMSSILKSMLPLFHIALLVFFMVHIYAIMGLELFKCKMHKTCYYQGTNIIAVREGNEKPSPCAQAGHGRRCTINGTECRAGWPGPNFGITHFDNSCFAMLTVFQCITTESWTDVLYWINDAMGNDWPWIYFLTLILVGSFFILNLVLGALSGEFTKEREESRSRGEYQKLRERQQMDEDLEGYMEWITHAEVMDGDSEALLLLRKDTDSESDSLYQMLDQQVIYFYRLARRWNVVLRRKCHVWVKSKFFNWWVLLVVLLNTLVIAMEHHNQTEGLTSFQDTANVILLACFTIEMVMKMYAFGPRAYFMSIFNRFDCFVVTIGILEIILVVSNIMTPLGISVMRCIRLLRLFKLTRYWTSLNNLVASLLNSVKSIASLLLLLFLFIVIFALLGMQVFGGKFNFPDRVIQRSNFDNFPQALISVFQVLTGEEWDSIMYNGIMAHGGPQSPGILVSIYFIILYVCGNFVLLNVFLAIAVDNLAEAESLTAAQKEKAEEKARRKLMRTLPEKSEEEKALMAKRLMESRSKAEGMPTTAKLKIDEFESNVNEVKDPFPPADFPGDHEEVEPEIPISPRPRPMADLQLKETVVPIAEASSFFIFGPQHKFRKLCHRIVNHTTFTNIILLFILLSSISLAAEDPIDPRSFRNKVLAYADIVFTTVFTIEIVLKMTVYGAFLHTGSFCRNSFNILDLIVVGVSLLSMGMESSTISVVKILRVLRVLRPLRAINRAKGLKHVVQCMFVAIKTIGNIVLVTMLLDFMFACIGVQLFKGKLYYCTDPLQKTAEECQGTFLKHVPNSLHDIEVHQRMWVNSDFNFDNVLNGMLALFTISTFEGWPEILYKAIDSNAVDTGPLYNNRVGISIFFIIYIIIIAFFMMNIFVGFVIVTFQKQGEQEYKDCELDKNQRQCVQYALKARPLKCYIPKNPHQYRVWYFVTSCYFEYLMFFLIMLNTLCLGIQHCNQSDHITKLSDTLNLIFTVLFTGEMIVKLIAFKAKGYFGDPWNVFDFIIVVGSIVDVVLSEVDAALEARGGLWCLHGCAEVNPMQAIAEAENVRVSITFFRLFRVLRLIKLLNRSEGIRNLLWTFIKSFQALPHVGLLIVMLFFIYAVIGMQMFGKVALVDGTEINRNNNFQTFPQAVLLLFRVATGEQWPKVILASMYGKLCDAKSDYGPGEEYTCGSSIAVFYFLSFYILCAFLIINLFVAIIMDNVDYLTRDWSILGPHHLDEFKKIWAEYDPEATGRIKHLDVVTLLRRIQPPLGFGKFCPHRSACKRLISMNMPLNSDGTVTFNATLFALVRTALKIKTEGNFEQANEELRAIIKSIWKRTSMKLLDQVIPPIGEDEVTVGKFYATFLIQEHFRKFMQRQEEYYGYRPTKKNADEIKAGLRSIEEEAAPELHRAISGDLIAEDDMERALEAGEEGIYRRTGGLFGLHTDPFSSEPSSPLSTQMTSQRPLQFVETRLEDIESPPDSVFLPNTEFFPDNMPTTTNTNNNANFVEDMSSRFTFENESLSAAATRNYSYEDIRGSSSYVGGASSVDDRRLSDFTVRTNITQFPYNPSYGPSKNQTATEASPATDKLIQQALRDGGLDSLAEDPKFVSVTRKELAEAINIGMEDMEGMAQGIVNRQSGKVTKRKRRPIPVPPGTKSTKPKENTSAV</sequence>
<proteinExistence type="evidence at transcript level"/>
<organism>
    <name type="scientific">Cyprinus carpio</name>
    <name type="common">Common carp</name>
    <dbReference type="NCBI Taxonomy" id="7962"/>
    <lineage>
        <taxon>Eukaryota</taxon>
        <taxon>Metazoa</taxon>
        <taxon>Chordata</taxon>
        <taxon>Craniata</taxon>
        <taxon>Vertebrata</taxon>
        <taxon>Euteleostomi</taxon>
        <taxon>Actinopterygii</taxon>
        <taxon>Neopterygii</taxon>
        <taxon>Teleostei</taxon>
        <taxon>Ostariophysi</taxon>
        <taxon>Cypriniformes</taxon>
        <taxon>Cyprinidae</taxon>
        <taxon>Cyprininae</taxon>
        <taxon>Cyprinus</taxon>
    </lineage>
</organism>